<evidence type="ECO:0000255" key="1">
    <source>
        <dbReference type="HAMAP-Rule" id="MF_00079"/>
    </source>
</evidence>
<dbReference type="EC" id="2.4.2.17" evidence="1"/>
<dbReference type="EMBL" id="AE009441">
    <property type="protein sequence ID" value="AAL63160.1"/>
    <property type="molecule type" value="Genomic_DNA"/>
</dbReference>
<dbReference type="RefSeq" id="WP_011007632.1">
    <property type="nucleotide sequence ID" value="NC_003364.1"/>
</dbReference>
<dbReference type="SMR" id="Q8ZY36"/>
<dbReference type="FunCoup" id="Q8ZY36">
    <property type="interactions" value="156"/>
</dbReference>
<dbReference type="STRING" id="178306.PAE0961"/>
<dbReference type="EnsemblBacteria" id="AAL63160">
    <property type="protein sequence ID" value="AAL63160"/>
    <property type="gene ID" value="PAE0961"/>
</dbReference>
<dbReference type="GeneID" id="1465395"/>
<dbReference type="KEGG" id="pai:PAE0961"/>
<dbReference type="PATRIC" id="fig|178306.9.peg.712"/>
<dbReference type="eggNOG" id="arCOG02208">
    <property type="taxonomic scope" value="Archaea"/>
</dbReference>
<dbReference type="HOGENOM" id="CLU_038115_1_1_2"/>
<dbReference type="InParanoid" id="Q8ZY36"/>
<dbReference type="UniPathway" id="UPA00031">
    <property type="reaction ID" value="UER00006"/>
</dbReference>
<dbReference type="Proteomes" id="UP000002439">
    <property type="component" value="Chromosome"/>
</dbReference>
<dbReference type="GO" id="GO:0005737">
    <property type="term" value="C:cytoplasm"/>
    <property type="evidence" value="ECO:0007669"/>
    <property type="project" value="UniProtKB-SubCell"/>
</dbReference>
<dbReference type="GO" id="GO:0005524">
    <property type="term" value="F:ATP binding"/>
    <property type="evidence" value="ECO:0007669"/>
    <property type="project" value="UniProtKB-KW"/>
</dbReference>
<dbReference type="GO" id="GO:0003879">
    <property type="term" value="F:ATP phosphoribosyltransferase activity"/>
    <property type="evidence" value="ECO:0000318"/>
    <property type="project" value="GO_Central"/>
</dbReference>
<dbReference type="GO" id="GO:0000287">
    <property type="term" value="F:magnesium ion binding"/>
    <property type="evidence" value="ECO:0007669"/>
    <property type="project" value="UniProtKB-UniRule"/>
</dbReference>
<dbReference type="GO" id="GO:0000105">
    <property type="term" value="P:L-histidine biosynthetic process"/>
    <property type="evidence" value="ECO:0000318"/>
    <property type="project" value="GO_Central"/>
</dbReference>
<dbReference type="CDD" id="cd13594">
    <property type="entry name" value="PBP2_HisGL4"/>
    <property type="match status" value="1"/>
</dbReference>
<dbReference type="FunFam" id="3.30.70.120:FF:000002">
    <property type="entry name" value="ATP phosphoribosyltransferase"/>
    <property type="match status" value="1"/>
</dbReference>
<dbReference type="Gene3D" id="3.30.70.120">
    <property type="match status" value="1"/>
</dbReference>
<dbReference type="Gene3D" id="3.40.190.10">
    <property type="entry name" value="Periplasmic binding protein-like II"/>
    <property type="match status" value="2"/>
</dbReference>
<dbReference type="HAMAP" id="MF_00079">
    <property type="entry name" value="HisG_Long"/>
    <property type="match status" value="1"/>
</dbReference>
<dbReference type="InterPro" id="IPR020621">
    <property type="entry name" value="ATP-PRT_HisG_long"/>
</dbReference>
<dbReference type="InterPro" id="IPR013820">
    <property type="entry name" value="ATP_PRibTrfase_cat"/>
</dbReference>
<dbReference type="InterPro" id="IPR018198">
    <property type="entry name" value="ATP_PRibTrfase_CS"/>
</dbReference>
<dbReference type="InterPro" id="IPR001348">
    <property type="entry name" value="ATP_PRibTrfase_HisG"/>
</dbReference>
<dbReference type="InterPro" id="IPR013115">
    <property type="entry name" value="HisG_C"/>
</dbReference>
<dbReference type="InterPro" id="IPR011322">
    <property type="entry name" value="N-reg_PII-like_a/b"/>
</dbReference>
<dbReference type="InterPro" id="IPR015867">
    <property type="entry name" value="N-reg_PII/ATP_PRibTrfase_C"/>
</dbReference>
<dbReference type="NCBIfam" id="TIGR00070">
    <property type="entry name" value="hisG"/>
    <property type="match status" value="1"/>
</dbReference>
<dbReference type="NCBIfam" id="TIGR03455">
    <property type="entry name" value="HisG_C-term"/>
    <property type="match status" value="1"/>
</dbReference>
<dbReference type="PANTHER" id="PTHR21403:SF10">
    <property type="entry name" value="ATP PHOSPHORIBOSYLTRANSFERASE"/>
    <property type="match status" value="1"/>
</dbReference>
<dbReference type="PANTHER" id="PTHR21403">
    <property type="entry name" value="ATP PHOSPHORIBOSYLTRANSFERASE ATP-PRTASE"/>
    <property type="match status" value="1"/>
</dbReference>
<dbReference type="Pfam" id="PF01634">
    <property type="entry name" value="HisG"/>
    <property type="match status" value="1"/>
</dbReference>
<dbReference type="Pfam" id="PF08029">
    <property type="entry name" value="HisG_C"/>
    <property type="match status" value="1"/>
</dbReference>
<dbReference type="SUPFAM" id="SSF54913">
    <property type="entry name" value="GlnB-like"/>
    <property type="match status" value="1"/>
</dbReference>
<dbReference type="SUPFAM" id="SSF53850">
    <property type="entry name" value="Periplasmic binding protein-like II"/>
    <property type="match status" value="1"/>
</dbReference>
<dbReference type="PROSITE" id="PS01316">
    <property type="entry name" value="ATP_P_PHORIBOSYLTR"/>
    <property type="match status" value="1"/>
</dbReference>
<proteinExistence type="inferred from homology"/>
<keyword id="KW-0028">Amino-acid biosynthesis</keyword>
<keyword id="KW-0067">ATP-binding</keyword>
<keyword id="KW-0963">Cytoplasm</keyword>
<keyword id="KW-0328">Glycosyltransferase</keyword>
<keyword id="KW-0368">Histidine biosynthesis</keyword>
<keyword id="KW-0460">Magnesium</keyword>
<keyword id="KW-0479">Metal-binding</keyword>
<keyword id="KW-0547">Nucleotide-binding</keyword>
<keyword id="KW-1185">Reference proteome</keyword>
<keyword id="KW-0808">Transferase</keyword>
<reference key="1">
    <citation type="journal article" date="2002" name="Proc. Natl. Acad. Sci. U.S.A.">
        <title>Genome sequence of the hyperthermophilic crenarchaeon Pyrobaculum aerophilum.</title>
        <authorList>
            <person name="Fitz-Gibbon S.T."/>
            <person name="Ladner H."/>
            <person name="Kim U.-J."/>
            <person name="Stetter K.O."/>
            <person name="Simon M.I."/>
            <person name="Miller J.H."/>
        </authorList>
    </citation>
    <scope>NUCLEOTIDE SEQUENCE [LARGE SCALE GENOMIC DNA]</scope>
    <source>
        <strain>ATCC 51768 / DSM 7523 / JCM 9630 / CIP 104966 / NBRC 100827 / IM2</strain>
    </source>
</reference>
<feature type="chain" id="PRO_0000151887" description="ATP phosphoribosyltransferase">
    <location>
        <begin position="1"/>
        <end position="282"/>
    </location>
</feature>
<gene>
    <name evidence="1" type="primary">hisG</name>
    <name type="ordered locus">PAE0961</name>
</gene>
<protein>
    <recommendedName>
        <fullName evidence="1">ATP phosphoribosyltransferase</fullName>
        <shortName evidence="1">ATP-PRT</shortName>
        <shortName evidence="1">ATP-PRTase</shortName>
        <ecNumber evidence="1">2.4.2.17</ecNumber>
    </recommendedName>
</protein>
<name>HIS1_PYRAE</name>
<accession>Q8ZY36</accession>
<comment type="function">
    <text evidence="1">Catalyzes the condensation of ATP and 5-phosphoribose 1-diphosphate to form N'-(5'-phosphoribosyl)-ATP (PR-ATP). Has a crucial role in the pathway because the rate of histidine biosynthesis seems to be controlled primarily by regulation of HisG enzymatic activity.</text>
</comment>
<comment type="catalytic activity">
    <reaction evidence="1">
        <text>1-(5-phospho-beta-D-ribosyl)-ATP + diphosphate = 5-phospho-alpha-D-ribose 1-diphosphate + ATP</text>
        <dbReference type="Rhea" id="RHEA:18473"/>
        <dbReference type="ChEBI" id="CHEBI:30616"/>
        <dbReference type="ChEBI" id="CHEBI:33019"/>
        <dbReference type="ChEBI" id="CHEBI:58017"/>
        <dbReference type="ChEBI" id="CHEBI:73183"/>
        <dbReference type="EC" id="2.4.2.17"/>
    </reaction>
</comment>
<comment type="cofactor">
    <cofactor evidence="1">
        <name>Mg(2+)</name>
        <dbReference type="ChEBI" id="CHEBI:18420"/>
    </cofactor>
</comment>
<comment type="activity regulation">
    <text evidence="1">Feedback inhibited by histidine.</text>
</comment>
<comment type="pathway">
    <text evidence="1">Amino-acid biosynthesis; L-histidine biosynthesis; L-histidine from 5-phospho-alpha-D-ribose 1-diphosphate: step 1/9.</text>
</comment>
<comment type="subcellular location">
    <subcellularLocation>
        <location evidence="1">Cytoplasm</location>
    </subcellularLocation>
</comment>
<comment type="similarity">
    <text evidence="1">Belongs to the ATP phosphoribosyltransferase family. Long subfamily.</text>
</comment>
<organism>
    <name type="scientific">Pyrobaculum aerophilum (strain ATCC 51768 / DSM 7523 / JCM 9630 / CIP 104966 / NBRC 100827 / IM2)</name>
    <dbReference type="NCBI Taxonomy" id="178306"/>
    <lineage>
        <taxon>Archaea</taxon>
        <taxon>Thermoproteota</taxon>
        <taxon>Thermoprotei</taxon>
        <taxon>Thermoproteales</taxon>
        <taxon>Thermoproteaceae</taxon>
        <taxon>Pyrobaculum</taxon>
    </lineage>
</organism>
<sequence length="282" mass="30468">MLLAVPSKGRLQEPTLKLLEAVGIRPLASDERALVVPTSWSDVNLIRARPEDIPYLVESGRVWAGITGHDYVVESGSNVAEVLELEFGRGKLVVAVPRSSGITSVEDLPPGARIATKFVNIAYNYFAELGKRVRIIRVTGSVEVLPQLGIADAILDVMATGTTLEVHGLVPIATVLETSARLVVNPQYVEHDLTKKLVTFIKGFYAAQGKKMVFLNVPASRLDAVLAVLPAMEAPSVTKLAKGDVYEVFSVVPEDVLPDLVMKLKEAGARDIVITPIEKLIV</sequence>